<accession>Q1LUA8</accession>
<accession>Q1LUA7</accession>
<protein>
    <recommendedName>
        <fullName evidence="1">Eukaryotic translation initiation factor 3 subunit E-B</fullName>
        <shortName evidence="1">eIF3e-B</shortName>
    </recommendedName>
    <alternativeName>
        <fullName evidence="1">Eukaryotic translation initiation factor 3 subunit 6-B</fullName>
    </alternativeName>
</protein>
<dbReference type="EMBL" id="BX957242">
    <property type="protein sequence ID" value="CAK04060.1"/>
    <property type="status" value="ALT_SEQ"/>
    <property type="molecule type" value="Genomic_DNA"/>
</dbReference>
<dbReference type="EMBL" id="BX957242">
    <property type="protein sequence ID" value="CAK04061.1"/>
    <property type="status" value="ALT_SEQ"/>
    <property type="molecule type" value="Genomic_DNA"/>
</dbReference>
<dbReference type="SMR" id="Q1LUA8"/>
<dbReference type="FunCoup" id="Q1LUA8">
    <property type="interactions" value="2923"/>
</dbReference>
<dbReference type="PaxDb" id="7955-ENSDARP00000003276"/>
<dbReference type="AGR" id="ZFIN:ZDB-GENE-050208-283"/>
<dbReference type="ZFIN" id="ZDB-GENE-050208-283">
    <property type="gene designation" value="eif3eb"/>
</dbReference>
<dbReference type="eggNOG" id="KOG2758">
    <property type="taxonomic scope" value="Eukaryota"/>
</dbReference>
<dbReference type="InParanoid" id="Q1LUA8"/>
<dbReference type="PhylomeDB" id="Q1LUA8"/>
<dbReference type="PRO" id="PR:Q1LUA8"/>
<dbReference type="Proteomes" id="UP000000437">
    <property type="component" value="Unplaced"/>
</dbReference>
<dbReference type="GO" id="GO:0016282">
    <property type="term" value="C:eukaryotic 43S preinitiation complex"/>
    <property type="evidence" value="ECO:0007669"/>
    <property type="project" value="UniProtKB-UniRule"/>
</dbReference>
<dbReference type="GO" id="GO:0033290">
    <property type="term" value="C:eukaryotic 48S preinitiation complex"/>
    <property type="evidence" value="ECO:0007669"/>
    <property type="project" value="UniProtKB-UniRule"/>
</dbReference>
<dbReference type="GO" id="GO:0005852">
    <property type="term" value="C:eukaryotic translation initiation factor 3 complex"/>
    <property type="evidence" value="ECO:0000250"/>
    <property type="project" value="UniProtKB"/>
</dbReference>
<dbReference type="GO" id="GO:0071540">
    <property type="term" value="C:eukaryotic translation initiation factor 3 complex, eIF3e"/>
    <property type="evidence" value="ECO:0007669"/>
    <property type="project" value="UniProtKB-UniRule"/>
</dbReference>
<dbReference type="GO" id="GO:0005634">
    <property type="term" value="C:nucleus"/>
    <property type="evidence" value="ECO:0000318"/>
    <property type="project" value="GO_Central"/>
</dbReference>
<dbReference type="GO" id="GO:0003743">
    <property type="term" value="F:translation initiation factor activity"/>
    <property type="evidence" value="ECO:0007669"/>
    <property type="project" value="UniProtKB-UniRule"/>
</dbReference>
<dbReference type="GO" id="GO:0001732">
    <property type="term" value="P:formation of cytoplasmic translation initiation complex"/>
    <property type="evidence" value="ECO:0007669"/>
    <property type="project" value="UniProtKB-UniRule"/>
</dbReference>
<dbReference type="GO" id="GO:0006413">
    <property type="term" value="P:translational initiation"/>
    <property type="evidence" value="ECO:0000250"/>
    <property type="project" value="UniProtKB"/>
</dbReference>
<dbReference type="CDD" id="cd21378">
    <property type="entry name" value="eIF3E"/>
    <property type="match status" value="1"/>
</dbReference>
<dbReference type="HAMAP" id="MF_03004">
    <property type="entry name" value="eIF3e"/>
    <property type="match status" value="1"/>
</dbReference>
<dbReference type="InterPro" id="IPR016650">
    <property type="entry name" value="eIF3e"/>
</dbReference>
<dbReference type="InterPro" id="IPR019010">
    <property type="entry name" value="eIF3e_N"/>
</dbReference>
<dbReference type="InterPro" id="IPR000717">
    <property type="entry name" value="PCI_dom"/>
</dbReference>
<dbReference type="InterPro" id="IPR036390">
    <property type="entry name" value="WH_DNA-bd_sf"/>
</dbReference>
<dbReference type="PANTHER" id="PTHR10317">
    <property type="entry name" value="EUKARYOTIC TRANSLATION INITIATION FACTOR 3 SUBUNIT E"/>
    <property type="match status" value="1"/>
</dbReference>
<dbReference type="Pfam" id="PF09440">
    <property type="entry name" value="eIF3_N"/>
    <property type="match status" value="1"/>
</dbReference>
<dbReference type="Pfam" id="PF21357">
    <property type="entry name" value="EIF3E_C"/>
    <property type="match status" value="1"/>
</dbReference>
<dbReference type="Pfam" id="PF01399">
    <property type="entry name" value="PCI"/>
    <property type="match status" value="1"/>
</dbReference>
<dbReference type="PIRSF" id="PIRSF016255">
    <property type="entry name" value="eIF3e_su6"/>
    <property type="match status" value="1"/>
</dbReference>
<dbReference type="SMART" id="SM01186">
    <property type="entry name" value="eIF3_N"/>
    <property type="match status" value="1"/>
</dbReference>
<dbReference type="SMART" id="SM00088">
    <property type="entry name" value="PINT"/>
    <property type="match status" value="1"/>
</dbReference>
<dbReference type="SUPFAM" id="SSF46785">
    <property type="entry name" value="Winged helix' DNA-binding domain"/>
    <property type="match status" value="1"/>
</dbReference>
<dbReference type="PROSITE" id="PS50250">
    <property type="entry name" value="PCI"/>
    <property type="match status" value="1"/>
</dbReference>
<comment type="function">
    <text evidence="1">Component of the eukaryotic translation initiation factor 3 (eIF-3) complex, which is involved in protein synthesis of a specialized repertoire of mRNAs and, together with other initiation factors, stimulates binding of mRNA and methionyl-tRNAi to the 40S ribosome. The eIF-3 complex specifically targets and initiates translation of a subset of mRNAs involved in cell proliferation.</text>
</comment>
<comment type="subunit">
    <text evidence="1">Component of the eukaryotic translation initiation factor 3 (eIF-3) complex, which is composed of 13 subunits: eif3a, eif3b, eif3c, eif3d, eif3e, eif3f, eif3g, eif3h, eif3i, eif3j, eif3k, eif3l and eif3m.</text>
</comment>
<comment type="subcellular location">
    <subcellularLocation>
        <location evidence="1">Cytoplasm</location>
    </subcellularLocation>
    <subcellularLocation>
        <location evidence="1">Nucleus</location>
    </subcellularLocation>
</comment>
<comment type="alternative products">
    <event type="alternative splicing"/>
    <isoform>
        <id>Q1LUA8-1</id>
        <name>1</name>
        <sequence type="displayed"/>
    </isoform>
    <isoform>
        <id>Q1LUA8-2</id>
        <name>2</name>
        <sequence type="described" ref="VSP_036544"/>
    </isoform>
</comment>
<comment type="similarity">
    <text evidence="1">Belongs to the eIF-3 subunit E family.</text>
</comment>
<comment type="sequence caution" evidence="3">
    <conflict type="erroneous gene model prediction">
        <sequence resource="EMBL-CDS" id="CAK04060"/>
    </conflict>
</comment>
<comment type="sequence caution" evidence="3">
    <conflict type="erroneous gene model prediction">
        <sequence resource="EMBL-CDS" id="CAK04061"/>
    </conflict>
</comment>
<keyword id="KW-0025">Alternative splicing</keyword>
<keyword id="KW-0963">Cytoplasm</keyword>
<keyword id="KW-0396">Initiation factor</keyword>
<keyword id="KW-0539">Nucleus</keyword>
<keyword id="KW-0648">Protein biosynthesis</keyword>
<keyword id="KW-1185">Reference proteome</keyword>
<feature type="chain" id="PRO_0000365955" description="Eukaryotic translation initiation factor 3 subunit E-B">
    <location>
        <begin position="1"/>
        <end position="446"/>
    </location>
</feature>
<feature type="domain" description="PCI" evidence="2">
    <location>
        <begin position="222"/>
        <end position="399"/>
    </location>
</feature>
<feature type="splice variant" id="VSP_036544" description="In isoform 2." evidence="3">
    <original>GHVVMGNNAVSPYQQVIEKTKSLSFRSQMLAMNIEKKISHSNRNETPNWAAQDTGFY</original>
    <variation>QENWSVLQLPRYSRRNADL</variation>
    <location>
        <begin position="390"/>
        <end position="446"/>
    </location>
</feature>
<reference key="1">
    <citation type="journal article" date="2013" name="Nature">
        <title>The zebrafish reference genome sequence and its relationship to the human genome.</title>
        <authorList>
            <person name="Howe K."/>
            <person name="Clark M.D."/>
            <person name="Torroja C.F."/>
            <person name="Torrance J."/>
            <person name="Berthelot C."/>
            <person name="Muffato M."/>
            <person name="Collins J.E."/>
            <person name="Humphray S."/>
            <person name="McLaren K."/>
            <person name="Matthews L."/>
            <person name="McLaren S."/>
            <person name="Sealy I."/>
            <person name="Caccamo M."/>
            <person name="Churcher C."/>
            <person name="Scott C."/>
            <person name="Barrett J.C."/>
            <person name="Koch R."/>
            <person name="Rauch G.J."/>
            <person name="White S."/>
            <person name="Chow W."/>
            <person name="Kilian B."/>
            <person name="Quintais L.T."/>
            <person name="Guerra-Assuncao J.A."/>
            <person name="Zhou Y."/>
            <person name="Gu Y."/>
            <person name="Yen J."/>
            <person name="Vogel J.H."/>
            <person name="Eyre T."/>
            <person name="Redmond S."/>
            <person name="Banerjee R."/>
            <person name="Chi J."/>
            <person name="Fu B."/>
            <person name="Langley E."/>
            <person name="Maguire S.F."/>
            <person name="Laird G.K."/>
            <person name="Lloyd D."/>
            <person name="Kenyon E."/>
            <person name="Donaldson S."/>
            <person name="Sehra H."/>
            <person name="Almeida-King J."/>
            <person name="Loveland J."/>
            <person name="Trevanion S."/>
            <person name="Jones M."/>
            <person name="Quail M."/>
            <person name="Willey D."/>
            <person name="Hunt A."/>
            <person name="Burton J."/>
            <person name="Sims S."/>
            <person name="McLay K."/>
            <person name="Plumb B."/>
            <person name="Davis J."/>
            <person name="Clee C."/>
            <person name="Oliver K."/>
            <person name="Clark R."/>
            <person name="Riddle C."/>
            <person name="Elliot D."/>
            <person name="Threadgold G."/>
            <person name="Harden G."/>
            <person name="Ware D."/>
            <person name="Begum S."/>
            <person name="Mortimore B."/>
            <person name="Kerry G."/>
            <person name="Heath P."/>
            <person name="Phillimore B."/>
            <person name="Tracey A."/>
            <person name="Corby N."/>
            <person name="Dunn M."/>
            <person name="Johnson C."/>
            <person name="Wood J."/>
            <person name="Clark S."/>
            <person name="Pelan S."/>
            <person name="Griffiths G."/>
            <person name="Smith M."/>
            <person name="Glithero R."/>
            <person name="Howden P."/>
            <person name="Barker N."/>
            <person name="Lloyd C."/>
            <person name="Stevens C."/>
            <person name="Harley J."/>
            <person name="Holt K."/>
            <person name="Panagiotidis G."/>
            <person name="Lovell J."/>
            <person name="Beasley H."/>
            <person name="Henderson C."/>
            <person name="Gordon D."/>
            <person name="Auger K."/>
            <person name="Wright D."/>
            <person name="Collins J."/>
            <person name="Raisen C."/>
            <person name="Dyer L."/>
            <person name="Leung K."/>
            <person name="Robertson L."/>
            <person name="Ambridge K."/>
            <person name="Leongamornlert D."/>
            <person name="McGuire S."/>
            <person name="Gilderthorp R."/>
            <person name="Griffiths C."/>
            <person name="Manthravadi D."/>
            <person name="Nichol S."/>
            <person name="Barker G."/>
            <person name="Whitehead S."/>
            <person name="Kay M."/>
            <person name="Brown J."/>
            <person name="Murnane C."/>
            <person name="Gray E."/>
            <person name="Humphries M."/>
            <person name="Sycamore N."/>
            <person name="Barker D."/>
            <person name="Saunders D."/>
            <person name="Wallis J."/>
            <person name="Babbage A."/>
            <person name="Hammond S."/>
            <person name="Mashreghi-Mohammadi M."/>
            <person name="Barr L."/>
            <person name="Martin S."/>
            <person name="Wray P."/>
            <person name="Ellington A."/>
            <person name="Matthews N."/>
            <person name="Ellwood M."/>
            <person name="Woodmansey R."/>
            <person name="Clark G."/>
            <person name="Cooper J."/>
            <person name="Tromans A."/>
            <person name="Grafham D."/>
            <person name="Skuce C."/>
            <person name="Pandian R."/>
            <person name="Andrews R."/>
            <person name="Harrison E."/>
            <person name="Kimberley A."/>
            <person name="Garnett J."/>
            <person name="Fosker N."/>
            <person name="Hall R."/>
            <person name="Garner P."/>
            <person name="Kelly D."/>
            <person name="Bird C."/>
            <person name="Palmer S."/>
            <person name="Gehring I."/>
            <person name="Berger A."/>
            <person name="Dooley C.M."/>
            <person name="Ersan-Urun Z."/>
            <person name="Eser C."/>
            <person name="Geiger H."/>
            <person name="Geisler M."/>
            <person name="Karotki L."/>
            <person name="Kirn A."/>
            <person name="Konantz J."/>
            <person name="Konantz M."/>
            <person name="Oberlander M."/>
            <person name="Rudolph-Geiger S."/>
            <person name="Teucke M."/>
            <person name="Lanz C."/>
            <person name="Raddatz G."/>
            <person name="Osoegawa K."/>
            <person name="Zhu B."/>
            <person name="Rapp A."/>
            <person name="Widaa S."/>
            <person name="Langford C."/>
            <person name="Yang F."/>
            <person name="Schuster S.C."/>
            <person name="Carter N.P."/>
            <person name="Harrow J."/>
            <person name="Ning Z."/>
            <person name="Herrero J."/>
            <person name="Searle S.M."/>
            <person name="Enright A."/>
            <person name="Geisler R."/>
            <person name="Plasterk R.H."/>
            <person name="Lee C."/>
            <person name="Westerfield M."/>
            <person name="de Jong P.J."/>
            <person name="Zon L.I."/>
            <person name="Postlethwait J.H."/>
            <person name="Nusslein-Volhard C."/>
            <person name="Hubbard T.J."/>
            <person name="Roest Crollius H."/>
            <person name="Rogers J."/>
            <person name="Stemple D.L."/>
        </authorList>
    </citation>
    <scope>NUCLEOTIDE SEQUENCE [LARGE SCALE GENOMIC DNA]</scope>
    <source>
        <strain>Tuebingen</strain>
    </source>
</reference>
<gene>
    <name type="primary">eif3eb</name>
    <name type="synonym">eif3s6b</name>
    <name type="ORF">si:ch211-129b17.1</name>
</gene>
<sequence>MAEYDLTTRIAHFLDRHLVFPLLEFLSVKEIYNEKELLQGKLDLLSETNMVDFAMDVYKNLYPDKEIPHSLRDKRTTVVAQLKQLQSETEPIVKMFEDPETQRQMQSTRDGRMLFEYLADKHSFRQEYLDTLYRYAKFQYECGNYSGAAEYLYFFRVLVPSTDRNALSSLWGKLASEILMQNWEAAMEDLTRLRETIDNNTVSSPLQSLQQRTWLIHWSLFVFFNHPKGRDNIIELFLYQPQYLNAIQTMCPHILRYLSTAVITNKDVRKRRQVLKDLVKVIQQESYTYKDPITEFVECLYVNFDFDSAQRKLRECESVLVNDFFLVACLEDFIENARLFIFETFCRIHQCISISMLADKLNMTPEEAERWIVNLIRNARLDAKIDSKLGHVVMGNNAVSPYQQVIEKTKSLSFRSQMLAMNIEKKISHSNRNETPNWAAQDTGFY</sequence>
<proteinExistence type="inferred from homology"/>
<evidence type="ECO:0000255" key="1">
    <source>
        <dbReference type="HAMAP-Rule" id="MF_03004"/>
    </source>
</evidence>
<evidence type="ECO:0000255" key="2">
    <source>
        <dbReference type="PROSITE-ProRule" id="PRU01185"/>
    </source>
</evidence>
<evidence type="ECO:0000305" key="3"/>
<organism>
    <name type="scientific">Danio rerio</name>
    <name type="common">Zebrafish</name>
    <name type="synonym">Brachydanio rerio</name>
    <dbReference type="NCBI Taxonomy" id="7955"/>
    <lineage>
        <taxon>Eukaryota</taxon>
        <taxon>Metazoa</taxon>
        <taxon>Chordata</taxon>
        <taxon>Craniata</taxon>
        <taxon>Vertebrata</taxon>
        <taxon>Euteleostomi</taxon>
        <taxon>Actinopterygii</taxon>
        <taxon>Neopterygii</taxon>
        <taxon>Teleostei</taxon>
        <taxon>Ostariophysi</taxon>
        <taxon>Cypriniformes</taxon>
        <taxon>Danionidae</taxon>
        <taxon>Danioninae</taxon>
        <taxon>Danio</taxon>
    </lineage>
</organism>
<name>EI3EB_DANRE</name>